<organism>
    <name type="scientific">Cronobacter sakazakii (strain ATCC BAA-894)</name>
    <name type="common">Enterobacter sakazakii</name>
    <dbReference type="NCBI Taxonomy" id="290339"/>
    <lineage>
        <taxon>Bacteria</taxon>
        <taxon>Pseudomonadati</taxon>
        <taxon>Pseudomonadota</taxon>
        <taxon>Gammaproteobacteria</taxon>
        <taxon>Enterobacterales</taxon>
        <taxon>Enterobacteriaceae</taxon>
        <taxon>Cronobacter</taxon>
    </lineage>
</organism>
<gene>
    <name evidence="1" type="primary">lgt</name>
    <name type="ordered locus">ESA_00481</name>
</gene>
<proteinExistence type="inferred from homology"/>
<feature type="chain" id="PRO_1000053428" description="Phosphatidylglycerol--prolipoprotein diacylglyceryl transferase">
    <location>
        <begin position="1"/>
        <end position="291"/>
    </location>
</feature>
<feature type="transmembrane region" description="Helical" evidence="1">
    <location>
        <begin position="21"/>
        <end position="41"/>
    </location>
</feature>
<feature type="transmembrane region" description="Helical" evidence="1">
    <location>
        <begin position="60"/>
        <end position="80"/>
    </location>
</feature>
<feature type="transmembrane region" description="Helical" evidence="1">
    <location>
        <begin position="96"/>
        <end position="116"/>
    </location>
</feature>
<feature type="transmembrane region" description="Helical" evidence="1">
    <location>
        <begin position="130"/>
        <end position="150"/>
    </location>
</feature>
<feature type="transmembrane region" description="Helical" evidence="1">
    <location>
        <begin position="198"/>
        <end position="218"/>
    </location>
</feature>
<feature type="transmembrane region" description="Helical" evidence="1">
    <location>
        <begin position="225"/>
        <end position="245"/>
    </location>
</feature>
<feature type="transmembrane region" description="Helical" evidence="1">
    <location>
        <begin position="260"/>
        <end position="280"/>
    </location>
</feature>
<feature type="binding site" evidence="1">
    <location>
        <position position="143"/>
    </location>
    <ligand>
        <name>a 1,2-diacyl-sn-glycero-3-phospho-(1'-sn-glycerol)</name>
        <dbReference type="ChEBI" id="CHEBI:64716"/>
    </ligand>
</feature>
<accession>A7MR30</accession>
<reference key="1">
    <citation type="journal article" date="2010" name="PLoS ONE">
        <title>Genome sequence of Cronobacter sakazakii BAA-894 and comparative genomic hybridization analysis with other Cronobacter species.</title>
        <authorList>
            <person name="Kucerova E."/>
            <person name="Clifton S.W."/>
            <person name="Xia X.Q."/>
            <person name="Long F."/>
            <person name="Porwollik S."/>
            <person name="Fulton L."/>
            <person name="Fronick C."/>
            <person name="Minx P."/>
            <person name="Kyung K."/>
            <person name="Warren W."/>
            <person name="Fulton R."/>
            <person name="Feng D."/>
            <person name="Wollam A."/>
            <person name="Shah N."/>
            <person name="Bhonagiri V."/>
            <person name="Nash W.E."/>
            <person name="Hallsworth-Pepin K."/>
            <person name="Wilson R.K."/>
            <person name="McClelland M."/>
            <person name="Forsythe S.J."/>
        </authorList>
    </citation>
    <scope>NUCLEOTIDE SEQUENCE [LARGE SCALE GENOMIC DNA]</scope>
    <source>
        <strain>ATCC BAA-894</strain>
    </source>
</reference>
<protein>
    <recommendedName>
        <fullName evidence="1">Phosphatidylglycerol--prolipoprotein diacylglyceryl transferase</fullName>
        <ecNumber evidence="1">2.5.1.145</ecNumber>
    </recommendedName>
</protein>
<keyword id="KW-0997">Cell inner membrane</keyword>
<keyword id="KW-1003">Cell membrane</keyword>
<keyword id="KW-0472">Membrane</keyword>
<keyword id="KW-1185">Reference proteome</keyword>
<keyword id="KW-0808">Transferase</keyword>
<keyword id="KW-0812">Transmembrane</keyword>
<keyword id="KW-1133">Transmembrane helix</keyword>
<sequence>MNSGYLHFPDFDPVIFSLGPVSLHWYGLMYLVGFVFAMWLAVRRANRPGSGWTKNEVENLLYAGFLGVFLGGRIGYVLFYNLPLFLENPLYLFRVWDGGMSFHGGLIGVICVMIWFAKRTKRNFFQVSDFIAPLIPFGLGAGRLGNFINGELWGRVDPGFPYAMLFPGSRSEDIGLLASHPEWQSLFNTYGVLPRHPSQLYELFLEGIVLFIILNLFIRKPRPMGAVSGLFLIGYGAFRIIVEFFRQPDAQFTGEWVQYISMGQILSIPMIVAGAAMMIWAYRRRPQQQLS</sequence>
<evidence type="ECO:0000255" key="1">
    <source>
        <dbReference type="HAMAP-Rule" id="MF_01147"/>
    </source>
</evidence>
<name>LGT_CROS8</name>
<comment type="function">
    <text evidence="1">Catalyzes the transfer of the diacylglyceryl group from phosphatidylglycerol to the sulfhydryl group of the N-terminal cysteine of a prolipoprotein, the first step in the formation of mature lipoproteins.</text>
</comment>
<comment type="catalytic activity">
    <reaction evidence="1">
        <text>L-cysteinyl-[prolipoprotein] + a 1,2-diacyl-sn-glycero-3-phospho-(1'-sn-glycerol) = an S-1,2-diacyl-sn-glyceryl-L-cysteinyl-[prolipoprotein] + sn-glycerol 1-phosphate + H(+)</text>
        <dbReference type="Rhea" id="RHEA:56712"/>
        <dbReference type="Rhea" id="RHEA-COMP:14679"/>
        <dbReference type="Rhea" id="RHEA-COMP:14680"/>
        <dbReference type="ChEBI" id="CHEBI:15378"/>
        <dbReference type="ChEBI" id="CHEBI:29950"/>
        <dbReference type="ChEBI" id="CHEBI:57685"/>
        <dbReference type="ChEBI" id="CHEBI:64716"/>
        <dbReference type="ChEBI" id="CHEBI:140658"/>
        <dbReference type="EC" id="2.5.1.145"/>
    </reaction>
</comment>
<comment type="pathway">
    <text evidence="1">Protein modification; lipoprotein biosynthesis (diacylglyceryl transfer).</text>
</comment>
<comment type="subcellular location">
    <subcellularLocation>
        <location evidence="1">Cell inner membrane</location>
        <topology evidence="1">Multi-pass membrane protein</topology>
    </subcellularLocation>
</comment>
<comment type="similarity">
    <text evidence="1">Belongs to the Lgt family.</text>
</comment>
<dbReference type="EC" id="2.5.1.145" evidence="1"/>
<dbReference type="EMBL" id="CP000783">
    <property type="protein sequence ID" value="ABU75776.1"/>
    <property type="molecule type" value="Genomic_DNA"/>
</dbReference>
<dbReference type="RefSeq" id="WP_004385953.1">
    <property type="nucleotide sequence ID" value="NC_009778.1"/>
</dbReference>
<dbReference type="SMR" id="A7MR30"/>
<dbReference type="KEGG" id="esa:ESA_00481"/>
<dbReference type="HOGENOM" id="CLU_013386_1_0_6"/>
<dbReference type="UniPathway" id="UPA00664"/>
<dbReference type="Proteomes" id="UP000000260">
    <property type="component" value="Chromosome"/>
</dbReference>
<dbReference type="GO" id="GO:0005886">
    <property type="term" value="C:plasma membrane"/>
    <property type="evidence" value="ECO:0007669"/>
    <property type="project" value="UniProtKB-SubCell"/>
</dbReference>
<dbReference type="GO" id="GO:0008961">
    <property type="term" value="F:phosphatidylglycerol-prolipoprotein diacylglyceryl transferase activity"/>
    <property type="evidence" value="ECO:0007669"/>
    <property type="project" value="UniProtKB-UniRule"/>
</dbReference>
<dbReference type="GO" id="GO:0042158">
    <property type="term" value="P:lipoprotein biosynthetic process"/>
    <property type="evidence" value="ECO:0007669"/>
    <property type="project" value="UniProtKB-UniRule"/>
</dbReference>
<dbReference type="HAMAP" id="MF_01147">
    <property type="entry name" value="Lgt"/>
    <property type="match status" value="1"/>
</dbReference>
<dbReference type="InterPro" id="IPR001640">
    <property type="entry name" value="Lgt"/>
</dbReference>
<dbReference type="NCBIfam" id="TIGR00544">
    <property type="entry name" value="lgt"/>
    <property type="match status" value="1"/>
</dbReference>
<dbReference type="PANTHER" id="PTHR30589:SF0">
    <property type="entry name" value="PHOSPHATIDYLGLYCEROL--PROLIPOPROTEIN DIACYLGLYCERYL TRANSFERASE"/>
    <property type="match status" value="1"/>
</dbReference>
<dbReference type="PANTHER" id="PTHR30589">
    <property type="entry name" value="PROLIPOPROTEIN DIACYLGLYCERYL TRANSFERASE"/>
    <property type="match status" value="1"/>
</dbReference>
<dbReference type="Pfam" id="PF01790">
    <property type="entry name" value="LGT"/>
    <property type="match status" value="1"/>
</dbReference>
<dbReference type="PROSITE" id="PS01311">
    <property type="entry name" value="LGT"/>
    <property type="match status" value="1"/>
</dbReference>